<comment type="function">
    <text evidence="1">Activates KDO (a required 8-carbon sugar) for incorporation into bacterial lipopolysaccharide in Gram-negative bacteria.</text>
</comment>
<comment type="catalytic activity">
    <reaction evidence="1">
        <text>3-deoxy-alpha-D-manno-oct-2-ulosonate + CTP = CMP-3-deoxy-beta-D-manno-octulosonate + diphosphate</text>
        <dbReference type="Rhea" id="RHEA:23448"/>
        <dbReference type="ChEBI" id="CHEBI:33019"/>
        <dbReference type="ChEBI" id="CHEBI:37563"/>
        <dbReference type="ChEBI" id="CHEBI:85986"/>
        <dbReference type="ChEBI" id="CHEBI:85987"/>
        <dbReference type="EC" id="2.7.7.38"/>
    </reaction>
</comment>
<comment type="pathway">
    <text evidence="1">Nucleotide-sugar biosynthesis; CMP-3-deoxy-D-manno-octulosonate biosynthesis; CMP-3-deoxy-D-manno-octulosonate from 3-deoxy-D-manno-octulosonate and CTP: step 1/1.</text>
</comment>
<comment type="pathway">
    <text evidence="1">Bacterial outer membrane biogenesis; lipopolysaccharide biosynthesis.</text>
</comment>
<comment type="subcellular location">
    <subcellularLocation>
        <location evidence="1">Cytoplasm</location>
    </subcellularLocation>
</comment>
<comment type="similarity">
    <text evidence="1">Belongs to the KdsB family.</text>
</comment>
<reference key="1">
    <citation type="journal article" date="2001" name="Proc. Natl. Acad. Sci. U.S.A.">
        <title>Complete genomic sequence of Pasteurella multocida Pm70.</title>
        <authorList>
            <person name="May B.J."/>
            <person name="Zhang Q."/>
            <person name="Li L.L."/>
            <person name="Paustian M.L."/>
            <person name="Whittam T.S."/>
            <person name="Kapur V."/>
        </authorList>
    </citation>
    <scope>NUCLEOTIDE SEQUENCE [LARGE SCALE GENOMIC DNA]</scope>
    <source>
        <strain>Pm70</strain>
    </source>
</reference>
<proteinExistence type="inferred from homology"/>
<dbReference type="EC" id="2.7.7.38" evidence="1"/>
<dbReference type="EMBL" id="AE004439">
    <property type="protein sequence ID" value="AAK02942.1"/>
    <property type="molecule type" value="Genomic_DNA"/>
</dbReference>
<dbReference type="RefSeq" id="WP_010906890.1">
    <property type="nucleotide sequence ID" value="NC_002663.1"/>
</dbReference>
<dbReference type="SMR" id="P57883"/>
<dbReference type="STRING" id="272843.PM0858"/>
<dbReference type="EnsemblBacteria" id="AAK02942">
    <property type="protein sequence ID" value="AAK02942"/>
    <property type="gene ID" value="PM0858"/>
</dbReference>
<dbReference type="KEGG" id="pmu:PM0858"/>
<dbReference type="PATRIC" id="fig|272843.6.peg.868"/>
<dbReference type="HOGENOM" id="CLU_065038_1_0_6"/>
<dbReference type="OrthoDB" id="9815559at2"/>
<dbReference type="UniPathway" id="UPA00030"/>
<dbReference type="UniPathway" id="UPA00358">
    <property type="reaction ID" value="UER00476"/>
</dbReference>
<dbReference type="Proteomes" id="UP000000809">
    <property type="component" value="Chromosome"/>
</dbReference>
<dbReference type="GO" id="GO:0005829">
    <property type="term" value="C:cytosol"/>
    <property type="evidence" value="ECO:0007669"/>
    <property type="project" value="TreeGrafter"/>
</dbReference>
<dbReference type="GO" id="GO:0008690">
    <property type="term" value="F:3-deoxy-manno-octulosonate cytidylyltransferase activity"/>
    <property type="evidence" value="ECO:0007669"/>
    <property type="project" value="UniProtKB-UniRule"/>
</dbReference>
<dbReference type="GO" id="GO:0033468">
    <property type="term" value="P:CMP-keto-3-deoxy-D-manno-octulosonic acid biosynthetic process"/>
    <property type="evidence" value="ECO:0007669"/>
    <property type="project" value="UniProtKB-UniRule"/>
</dbReference>
<dbReference type="GO" id="GO:0009103">
    <property type="term" value="P:lipopolysaccharide biosynthetic process"/>
    <property type="evidence" value="ECO:0007669"/>
    <property type="project" value="UniProtKB-UniRule"/>
</dbReference>
<dbReference type="CDD" id="cd02517">
    <property type="entry name" value="CMP-KDO-Synthetase"/>
    <property type="match status" value="1"/>
</dbReference>
<dbReference type="FunFam" id="3.90.550.10:FF:000011">
    <property type="entry name" value="3-deoxy-manno-octulosonate cytidylyltransferase"/>
    <property type="match status" value="1"/>
</dbReference>
<dbReference type="Gene3D" id="3.90.550.10">
    <property type="entry name" value="Spore Coat Polysaccharide Biosynthesis Protein SpsA, Chain A"/>
    <property type="match status" value="1"/>
</dbReference>
<dbReference type="HAMAP" id="MF_00057">
    <property type="entry name" value="KdsB"/>
    <property type="match status" value="1"/>
</dbReference>
<dbReference type="InterPro" id="IPR003329">
    <property type="entry name" value="Cytidylyl_trans"/>
</dbReference>
<dbReference type="InterPro" id="IPR004528">
    <property type="entry name" value="KdsB"/>
</dbReference>
<dbReference type="InterPro" id="IPR029044">
    <property type="entry name" value="Nucleotide-diphossugar_trans"/>
</dbReference>
<dbReference type="NCBIfam" id="TIGR00466">
    <property type="entry name" value="kdsB"/>
    <property type="match status" value="1"/>
</dbReference>
<dbReference type="NCBIfam" id="NF003950">
    <property type="entry name" value="PRK05450.1-3"/>
    <property type="match status" value="1"/>
</dbReference>
<dbReference type="NCBIfam" id="NF003952">
    <property type="entry name" value="PRK05450.1-5"/>
    <property type="match status" value="1"/>
</dbReference>
<dbReference type="NCBIfam" id="NF009905">
    <property type="entry name" value="PRK13368.1"/>
    <property type="match status" value="1"/>
</dbReference>
<dbReference type="PANTHER" id="PTHR42866">
    <property type="entry name" value="3-DEOXY-MANNO-OCTULOSONATE CYTIDYLYLTRANSFERASE"/>
    <property type="match status" value="1"/>
</dbReference>
<dbReference type="PANTHER" id="PTHR42866:SF2">
    <property type="entry name" value="3-DEOXY-MANNO-OCTULOSONATE CYTIDYLYLTRANSFERASE, MITOCHONDRIAL"/>
    <property type="match status" value="1"/>
</dbReference>
<dbReference type="Pfam" id="PF02348">
    <property type="entry name" value="CTP_transf_3"/>
    <property type="match status" value="1"/>
</dbReference>
<dbReference type="SUPFAM" id="SSF53448">
    <property type="entry name" value="Nucleotide-diphospho-sugar transferases"/>
    <property type="match status" value="1"/>
</dbReference>
<evidence type="ECO:0000255" key="1">
    <source>
        <dbReference type="HAMAP-Rule" id="MF_00057"/>
    </source>
</evidence>
<organism>
    <name type="scientific">Pasteurella multocida (strain Pm70)</name>
    <dbReference type="NCBI Taxonomy" id="272843"/>
    <lineage>
        <taxon>Bacteria</taxon>
        <taxon>Pseudomonadati</taxon>
        <taxon>Pseudomonadota</taxon>
        <taxon>Gammaproteobacteria</taxon>
        <taxon>Pasteurellales</taxon>
        <taxon>Pasteurellaceae</taxon>
        <taxon>Pasteurella</taxon>
    </lineage>
</organism>
<name>KDSB_PASMU</name>
<protein>
    <recommendedName>
        <fullName evidence="1">3-deoxy-manno-octulosonate cytidylyltransferase</fullName>
        <ecNumber evidence="1">2.7.7.38</ecNumber>
    </recommendedName>
    <alternativeName>
        <fullName evidence="1">CMP-2-keto-3-deoxyoctulosonic acid synthase</fullName>
        <shortName evidence="1">CKS</shortName>
        <shortName evidence="1">CMP-KDO synthase</shortName>
    </alternativeName>
</protein>
<keyword id="KW-0963">Cytoplasm</keyword>
<keyword id="KW-0448">Lipopolysaccharide biosynthesis</keyword>
<keyword id="KW-0548">Nucleotidyltransferase</keyword>
<keyword id="KW-1185">Reference proteome</keyword>
<keyword id="KW-0808">Transferase</keyword>
<feature type="chain" id="PRO_0000188509" description="3-deoxy-manno-octulosonate cytidylyltransferase">
    <location>
        <begin position="1"/>
        <end position="258"/>
    </location>
</feature>
<gene>
    <name evidence="1" type="primary">kdsB</name>
    <name type="ordered locus">PM0858</name>
</gene>
<accession>P57883</accession>
<sequence>MTNFTVIIPARYASTRLPGKPLAEIAGKPMIAHVFEKAMQSGAKRVIVATDHEQVATVARGFGAEVCMTSETHQSGTERLAEVVEKLGIAEDEIIVNIQGDEPLIPPAIVRQVAENLAKYQVKMASLAVNITDPEELFNPNAVKVLTDHAGYVLYFSRAPIPWHRDQFASLPKEKSTRGQLVLSDHYLRHIGIYAYRAGFIKQYIQWQPSVLEQIESLEQLRVLWYGEKIHVELAREVPPVGVDTAEDLEKVRSILEK</sequence>